<organism>
    <name type="scientific">Aspergillus terreus (strain NIH 2624 / FGSC A1156)</name>
    <dbReference type="NCBI Taxonomy" id="341663"/>
    <lineage>
        <taxon>Eukaryota</taxon>
        <taxon>Fungi</taxon>
        <taxon>Dikarya</taxon>
        <taxon>Ascomycota</taxon>
        <taxon>Pezizomycotina</taxon>
        <taxon>Eurotiomycetes</taxon>
        <taxon>Eurotiomycetidae</taxon>
        <taxon>Eurotiales</taxon>
        <taxon>Aspergillaceae</taxon>
        <taxon>Aspergillus</taxon>
        <taxon>Aspergillus subgen. Circumdati</taxon>
    </lineage>
</organism>
<keyword id="KW-0106">Calcium</keyword>
<keyword id="KW-0119">Carbohydrate metabolism</keyword>
<keyword id="KW-0961">Cell wall biogenesis/degradation</keyword>
<keyword id="KW-0325">Glycoprotein</keyword>
<keyword id="KW-0456">Lyase</keyword>
<keyword id="KW-0624">Polysaccharide degradation</keyword>
<keyword id="KW-1185">Reference proteome</keyword>
<keyword id="KW-0964">Secreted</keyword>
<keyword id="KW-0732">Signal</keyword>
<sequence>MRSTAAVLSILLPGALACLGYEGGVPKPTAHYSNSKVIEIAAGQVFDAGWAKYDRGSGACSGDSEGSWQDAVFYLHSGATLKNVIIGKDQAEGVHCDGPCNLEFVWFEDVCEDAITIKNDKAGQETWIVGGGAYHASDKIVQHNGCGTVNIINFYAEDYGKVYRSCGNCSSQCKRNVYVEGVTARDGGEVVGINSNYGDTATLKNVCTDASHPCVLYKGCAGGCEPSKVGYCSG</sequence>
<accession>Q0CCF8</accession>
<proteinExistence type="inferred from homology"/>
<gene>
    <name type="primary">plyF</name>
    <name type="ORF">ATEG_08626</name>
</gene>
<comment type="function">
    <text evidence="1">Pectinolytic enzyme consist of four classes of enzymes: pectin lyase, polygalacturonase, pectin methylesterase and rhamnogalacturonase. Among pectinolytic enzymes, pectin lyase is the most important in depolymerization of pectin, since it cleaves internal glycosidic bonds of highly methylated pectins. Favors pectate, the anion, over pectin, the methyl ester (By similarity).</text>
</comment>
<comment type="catalytic activity">
    <reaction>
        <text>Eliminative cleavage of (1-&gt;4)-alpha-D-galacturonan to give oligosaccharides with 4-deoxy-alpha-D-galact-4-enuronosyl groups at their non-reducing ends.</text>
        <dbReference type="EC" id="4.2.2.2"/>
    </reaction>
</comment>
<comment type="cofactor">
    <cofactor evidence="1">
        <name>Ca(2+)</name>
        <dbReference type="ChEBI" id="CHEBI:29108"/>
    </cofactor>
    <text evidence="1">Binds 1 Ca(2+) ion per subunit.</text>
</comment>
<comment type="subcellular location">
    <subcellularLocation>
        <location evidence="1">Secreted</location>
    </subcellularLocation>
</comment>
<comment type="similarity">
    <text evidence="3">Belongs to the polysaccharide lyase 3 family.</text>
</comment>
<reference key="1">
    <citation type="submission" date="2005-09" db="EMBL/GenBank/DDBJ databases">
        <title>Annotation of the Aspergillus terreus NIH2624 genome.</title>
        <authorList>
            <person name="Birren B.W."/>
            <person name="Lander E.S."/>
            <person name="Galagan J.E."/>
            <person name="Nusbaum C."/>
            <person name="Devon K."/>
            <person name="Henn M."/>
            <person name="Ma L.-J."/>
            <person name="Jaffe D.B."/>
            <person name="Butler J."/>
            <person name="Alvarez P."/>
            <person name="Gnerre S."/>
            <person name="Grabherr M."/>
            <person name="Kleber M."/>
            <person name="Mauceli E.W."/>
            <person name="Brockman W."/>
            <person name="Rounsley S."/>
            <person name="Young S.K."/>
            <person name="LaButti K."/>
            <person name="Pushparaj V."/>
            <person name="DeCaprio D."/>
            <person name="Crawford M."/>
            <person name="Koehrsen M."/>
            <person name="Engels R."/>
            <person name="Montgomery P."/>
            <person name="Pearson M."/>
            <person name="Howarth C."/>
            <person name="Larson L."/>
            <person name="Luoma S."/>
            <person name="White J."/>
            <person name="Alvarado L."/>
            <person name="Kodira C.D."/>
            <person name="Zeng Q."/>
            <person name="Oleary S."/>
            <person name="Yandava C."/>
            <person name="Denning D.W."/>
            <person name="Nierman W.C."/>
            <person name="Milne T."/>
            <person name="Madden K."/>
        </authorList>
    </citation>
    <scope>NUCLEOTIDE SEQUENCE [LARGE SCALE GENOMIC DNA]</scope>
    <source>
        <strain>NIH 2624 / FGSC A1156</strain>
    </source>
</reference>
<dbReference type="EC" id="4.2.2.2"/>
<dbReference type="EMBL" id="CH476606">
    <property type="protein sequence ID" value="EAU30758.1"/>
    <property type="molecule type" value="Genomic_DNA"/>
</dbReference>
<dbReference type="RefSeq" id="XP_001217212.1">
    <property type="nucleotide sequence ID" value="XM_001217211.1"/>
</dbReference>
<dbReference type="SMR" id="Q0CCF8"/>
<dbReference type="STRING" id="341663.Q0CCF8"/>
<dbReference type="GlyCosmos" id="Q0CCF8">
    <property type="glycosylation" value="1 site, No reported glycans"/>
</dbReference>
<dbReference type="EnsemblFungi" id="EAU30758">
    <property type="protein sequence ID" value="EAU30758"/>
    <property type="gene ID" value="ATEG_08626"/>
</dbReference>
<dbReference type="GeneID" id="4323567"/>
<dbReference type="VEuPathDB" id="FungiDB:ATEG_08626"/>
<dbReference type="eggNOG" id="ENOG502QSM3">
    <property type="taxonomic scope" value="Eukaryota"/>
</dbReference>
<dbReference type="HOGENOM" id="CLU_044863_3_1_1"/>
<dbReference type="OMA" id="DADHPCV"/>
<dbReference type="OrthoDB" id="441042at2759"/>
<dbReference type="Proteomes" id="UP000007963">
    <property type="component" value="Unassembled WGS sequence"/>
</dbReference>
<dbReference type="GO" id="GO:0005576">
    <property type="term" value="C:extracellular region"/>
    <property type="evidence" value="ECO:0007669"/>
    <property type="project" value="UniProtKB-SubCell"/>
</dbReference>
<dbReference type="GO" id="GO:0030570">
    <property type="term" value="F:pectate lyase activity"/>
    <property type="evidence" value="ECO:0007669"/>
    <property type="project" value="UniProtKB-EC"/>
</dbReference>
<dbReference type="GO" id="GO:0071555">
    <property type="term" value="P:cell wall organization"/>
    <property type="evidence" value="ECO:0007669"/>
    <property type="project" value="UniProtKB-KW"/>
</dbReference>
<dbReference type="GO" id="GO:0045490">
    <property type="term" value="P:pectin catabolic process"/>
    <property type="evidence" value="ECO:0007669"/>
    <property type="project" value="TreeGrafter"/>
</dbReference>
<dbReference type="Gene3D" id="2.160.20.10">
    <property type="entry name" value="Single-stranded right-handed beta-helix, Pectin lyase-like"/>
    <property type="match status" value="1"/>
</dbReference>
<dbReference type="InterPro" id="IPR004898">
    <property type="entry name" value="Pectate_lyase_PlyH/PlyE-like"/>
</dbReference>
<dbReference type="InterPro" id="IPR012334">
    <property type="entry name" value="Pectin_lyas_fold"/>
</dbReference>
<dbReference type="InterPro" id="IPR011050">
    <property type="entry name" value="Pectin_lyase_fold/virulence"/>
</dbReference>
<dbReference type="PANTHER" id="PTHR33407">
    <property type="entry name" value="PECTATE LYASE F-RELATED"/>
    <property type="match status" value="1"/>
</dbReference>
<dbReference type="PANTHER" id="PTHR33407:SF9">
    <property type="entry name" value="PECTATE LYASE F-RELATED"/>
    <property type="match status" value="1"/>
</dbReference>
<dbReference type="Pfam" id="PF03211">
    <property type="entry name" value="Pectate_lyase"/>
    <property type="match status" value="1"/>
</dbReference>
<dbReference type="SUPFAM" id="SSF51126">
    <property type="entry name" value="Pectin lyase-like"/>
    <property type="match status" value="1"/>
</dbReference>
<protein>
    <recommendedName>
        <fullName>Probable pectate lyase F</fullName>
        <ecNumber>4.2.2.2</ecNumber>
    </recommendedName>
</protein>
<name>PLYF_ASPTN</name>
<evidence type="ECO:0000250" key="1"/>
<evidence type="ECO:0000255" key="2"/>
<evidence type="ECO:0000305" key="3"/>
<feature type="signal peptide" evidence="2">
    <location>
        <begin position="1"/>
        <end position="17"/>
    </location>
</feature>
<feature type="chain" id="PRO_0000394590" description="Probable pectate lyase F">
    <location>
        <begin position="18"/>
        <end position="234"/>
    </location>
</feature>
<feature type="glycosylation site" description="N-linked (GlcNAc...) asparagine" evidence="2">
    <location>
        <position position="168"/>
    </location>
</feature>